<sequence>MKYDTSELCDIYQEDVNVVEPLFSNFGGRSSFGGQIITVKCFEDNGLLYDLLEQNGRGRVLLVDGGGSVRRALVDAELARLATQNEWEGLVIYGAVRQVDDLEELDIGIQAIAAIPVGAAGEGIGESDVRVNFGGVTFFSGDHLYADNTGIILSEDPLDIE</sequence>
<gene>
    <name evidence="1" type="primary">rraA</name>
    <name type="ordered locus">SPC_4195</name>
</gene>
<feature type="chain" id="PRO_1000135497" description="Regulator of ribonuclease activity A">
    <location>
        <begin position="1"/>
        <end position="161"/>
    </location>
</feature>
<comment type="function">
    <text evidence="1">Globally modulates RNA abundance by binding to RNase E (Rne) and regulating its endonucleolytic activity. Can modulate Rne action in a substrate-dependent manner by altering the composition of the degradosome. Modulates RNA-binding and helicase activities of the degradosome.</text>
</comment>
<comment type="subunit">
    <text evidence="1">Homotrimer. Binds to both RNA-binding sites in the C-terminal region of Rne and to RhlB.</text>
</comment>
<comment type="subcellular location">
    <subcellularLocation>
        <location evidence="1">Cytoplasm</location>
    </subcellularLocation>
</comment>
<comment type="similarity">
    <text evidence="1">Belongs to the RraA family.</text>
</comment>
<reference key="1">
    <citation type="journal article" date="2009" name="PLoS ONE">
        <title>Salmonella paratyphi C: genetic divergence from Salmonella choleraesuis and pathogenic convergence with Salmonella typhi.</title>
        <authorList>
            <person name="Liu W.-Q."/>
            <person name="Feng Y."/>
            <person name="Wang Y."/>
            <person name="Zou Q.-H."/>
            <person name="Chen F."/>
            <person name="Guo J.-T."/>
            <person name="Peng Y.-H."/>
            <person name="Jin Y."/>
            <person name="Li Y.-G."/>
            <person name="Hu S.-N."/>
            <person name="Johnston R.N."/>
            <person name="Liu G.-R."/>
            <person name="Liu S.-L."/>
        </authorList>
    </citation>
    <scope>NUCLEOTIDE SEQUENCE [LARGE SCALE GENOMIC DNA]</scope>
    <source>
        <strain>RKS4594</strain>
    </source>
</reference>
<accession>C0Q439</accession>
<keyword id="KW-0963">Cytoplasm</keyword>
<organism>
    <name type="scientific">Salmonella paratyphi C (strain RKS4594)</name>
    <dbReference type="NCBI Taxonomy" id="476213"/>
    <lineage>
        <taxon>Bacteria</taxon>
        <taxon>Pseudomonadati</taxon>
        <taxon>Pseudomonadota</taxon>
        <taxon>Gammaproteobacteria</taxon>
        <taxon>Enterobacterales</taxon>
        <taxon>Enterobacteriaceae</taxon>
        <taxon>Salmonella</taxon>
    </lineage>
</organism>
<evidence type="ECO:0000255" key="1">
    <source>
        <dbReference type="HAMAP-Rule" id="MF_00471"/>
    </source>
</evidence>
<name>RRAA_SALPC</name>
<protein>
    <recommendedName>
        <fullName evidence="1">Regulator of ribonuclease activity A</fullName>
    </recommendedName>
</protein>
<dbReference type="EMBL" id="CP000857">
    <property type="protein sequence ID" value="ACN48258.1"/>
    <property type="molecule type" value="Genomic_DNA"/>
</dbReference>
<dbReference type="RefSeq" id="WP_000872918.1">
    <property type="nucleotide sequence ID" value="NC_012125.1"/>
</dbReference>
<dbReference type="SMR" id="C0Q439"/>
<dbReference type="KEGG" id="sei:SPC_4195"/>
<dbReference type="HOGENOM" id="CLU_072626_4_0_6"/>
<dbReference type="Proteomes" id="UP000001599">
    <property type="component" value="Chromosome"/>
</dbReference>
<dbReference type="GO" id="GO:0005829">
    <property type="term" value="C:cytosol"/>
    <property type="evidence" value="ECO:0007669"/>
    <property type="project" value="TreeGrafter"/>
</dbReference>
<dbReference type="GO" id="GO:0060698">
    <property type="term" value="F:endoribonuclease inhibitor activity"/>
    <property type="evidence" value="ECO:0007669"/>
    <property type="project" value="UniProtKB-UniRule"/>
</dbReference>
<dbReference type="GO" id="GO:0019899">
    <property type="term" value="F:enzyme binding"/>
    <property type="evidence" value="ECO:0007669"/>
    <property type="project" value="UniProtKB-UniRule"/>
</dbReference>
<dbReference type="GO" id="GO:1902369">
    <property type="term" value="P:negative regulation of RNA catabolic process"/>
    <property type="evidence" value="ECO:0007669"/>
    <property type="project" value="TreeGrafter"/>
</dbReference>
<dbReference type="CDD" id="cd16841">
    <property type="entry name" value="RraA_family"/>
    <property type="match status" value="1"/>
</dbReference>
<dbReference type="FunFam" id="3.50.30.40:FF:000001">
    <property type="entry name" value="Regulator of ribonuclease activity A"/>
    <property type="match status" value="1"/>
</dbReference>
<dbReference type="Gene3D" id="3.50.30.40">
    <property type="entry name" value="Ribonuclease E inhibitor RraA/RraA-like"/>
    <property type="match status" value="1"/>
</dbReference>
<dbReference type="HAMAP" id="MF_00471">
    <property type="entry name" value="RraA"/>
    <property type="match status" value="1"/>
</dbReference>
<dbReference type="InterPro" id="IPR010203">
    <property type="entry name" value="RraA"/>
</dbReference>
<dbReference type="InterPro" id="IPR005493">
    <property type="entry name" value="RraA/RraA-like"/>
</dbReference>
<dbReference type="InterPro" id="IPR036704">
    <property type="entry name" value="RraA/RraA-like_sf"/>
</dbReference>
<dbReference type="InterPro" id="IPR014339">
    <property type="entry name" value="RraA_gpbac"/>
</dbReference>
<dbReference type="NCBIfam" id="TIGR01935">
    <property type="entry name" value="NOT-MenG"/>
    <property type="match status" value="1"/>
</dbReference>
<dbReference type="NCBIfam" id="NF006875">
    <property type="entry name" value="PRK09372.1"/>
    <property type="match status" value="1"/>
</dbReference>
<dbReference type="NCBIfam" id="TIGR02998">
    <property type="entry name" value="RraA_entero"/>
    <property type="match status" value="1"/>
</dbReference>
<dbReference type="PANTHER" id="PTHR33254">
    <property type="entry name" value="4-HYDROXY-4-METHYL-2-OXOGLUTARATE ALDOLASE 3-RELATED"/>
    <property type="match status" value="1"/>
</dbReference>
<dbReference type="PANTHER" id="PTHR33254:SF29">
    <property type="entry name" value="REGULATOR OF RIBONUCLEASE ACTIVITY A"/>
    <property type="match status" value="1"/>
</dbReference>
<dbReference type="Pfam" id="PF03737">
    <property type="entry name" value="RraA-like"/>
    <property type="match status" value="1"/>
</dbReference>
<dbReference type="SUPFAM" id="SSF89562">
    <property type="entry name" value="RraA-like"/>
    <property type="match status" value="1"/>
</dbReference>
<proteinExistence type="inferred from homology"/>